<gene>
    <name evidence="1" type="primary">sfsA</name>
    <name type="ordered locus">Cthe_2973</name>
</gene>
<comment type="similarity">
    <text evidence="1">Belongs to the SfsA family.</text>
</comment>
<protein>
    <recommendedName>
        <fullName evidence="1">Sugar fermentation stimulation protein homolog</fullName>
    </recommendedName>
</protein>
<reference key="1">
    <citation type="submission" date="2007-02" db="EMBL/GenBank/DDBJ databases">
        <title>Complete sequence of Clostridium thermocellum ATCC 27405.</title>
        <authorList>
            <consortium name="US DOE Joint Genome Institute"/>
            <person name="Copeland A."/>
            <person name="Lucas S."/>
            <person name="Lapidus A."/>
            <person name="Barry K."/>
            <person name="Detter J.C."/>
            <person name="Glavina del Rio T."/>
            <person name="Hammon N."/>
            <person name="Israni S."/>
            <person name="Dalin E."/>
            <person name="Tice H."/>
            <person name="Pitluck S."/>
            <person name="Chertkov O."/>
            <person name="Brettin T."/>
            <person name="Bruce D."/>
            <person name="Han C."/>
            <person name="Tapia R."/>
            <person name="Gilna P."/>
            <person name="Schmutz J."/>
            <person name="Larimer F."/>
            <person name="Land M."/>
            <person name="Hauser L."/>
            <person name="Kyrpides N."/>
            <person name="Mikhailova N."/>
            <person name="Wu J.H.D."/>
            <person name="Newcomb M."/>
            <person name="Richardson P."/>
        </authorList>
    </citation>
    <scope>NUCLEOTIDE SEQUENCE [LARGE SCALE GENOMIC DNA]</scope>
    <source>
        <strain>ATCC 27405 / DSM 1237 / JCM 9322 / NBRC 103400 / NCIMB 10682 / NRRL B-4536 / VPI 7372</strain>
    </source>
</reference>
<sequence>MRIEGELVKAKFVKRLNRFVALVEVDGVQEFAHVPNTGRLKELLVDGAAVMVRKYDKTDRKTRFGLILVRKNGIWVSIDSANAPNRIMYEALVQGKFDKFRDYSEIRREVTVLNSRFDFGLFSEGKEYYIEVKGVTLVENRQGFFPDAPTQRGTRHLEELTKIRQNGKEAGVAFIVQREDADVVRPNDRTDKNFANALRIAAEAGVDLMAYVCKVDAEQRRMDIVREIPVIIK</sequence>
<organism>
    <name type="scientific">Acetivibrio thermocellus (strain ATCC 27405 / DSM 1237 / JCM 9322 / NBRC 103400 / NCIMB 10682 / NRRL B-4536 / VPI 7372)</name>
    <name type="common">Clostridium thermocellum</name>
    <dbReference type="NCBI Taxonomy" id="203119"/>
    <lineage>
        <taxon>Bacteria</taxon>
        <taxon>Bacillati</taxon>
        <taxon>Bacillota</taxon>
        <taxon>Clostridia</taxon>
        <taxon>Eubacteriales</taxon>
        <taxon>Oscillospiraceae</taxon>
        <taxon>Acetivibrio</taxon>
    </lineage>
</organism>
<name>SFSA_ACET2</name>
<proteinExistence type="inferred from homology"/>
<keyword id="KW-1185">Reference proteome</keyword>
<dbReference type="EMBL" id="CP000568">
    <property type="protein sequence ID" value="ABN54170.1"/>
    <property type="molecule type" value="Genomic_DNA"/>
</dbReference>
<dbReference type="RefSeq" id="WP_020457978.1">
    <property type="nucleotide sequence ID" value="NC_009012.1"/>
</dbReference>
<dbReference type="SMR" id="A3DJP1"/>
<dbReference type="STRING" id="203119.Cthe_2973"/>
<dbReference type="GeneID" id="35804016"/>
<dbReference type="KEGG" id="cth:Cthe_2973"/>
<dbReference type="eggNOG" id="COG1489">
    <property type="taxonomic scope" value="Bacteria"/>
</dbReference>
<dbReference type="HOGENOM" id="CLU_052299_1_0_9"/>
<dbReference type="OrthoDB" id="9802365at2"/>
<dbReference type="Proteomes" id="UP000002145">
    <property type="component" value="Chromosome"/>
</dbReference>
<dbReference type="GO" id="GO:0003677">
    <property type="term" value="F:DNA binding"/>
    <property type="evidence" value="ECO:0007669"/>
    <property type="project" value="InterPro"/>
</dbReference>
<dbReference type="CDD" id="cd22359">
    <property type="entry name" value="SfsA-like_bacterial"/>
    <property type="match status" value="1"/>
</dbReference>
<dbReference type="Gene3D" id="2.40.50.580">
    <property type="match status" value="1"/>
</dbReference>
<dbReference type="Gene3D" id="3.40.1350.60">
    <property type="match status" value="1"/>
</dbReference>
<dbReference type="HAMAP" id="MF_00095">
    <property type="entry name" value="SfsA"/>
    <property type="match status" value="1"/>
</dbReference>
<dbReference type="InterPro" id="IPR005224">
    <property type="entry name" value="SfsA"/>
</dbReference>
<dbReference type="InterPro" id="IPR040452">
    <property type="entry name" value="SfsA_C"/>
</dbReference>
<dbReference type="InterPro" id="IPR041465">
    <property type="entry name" value="SfsA_N"/>
</dbReference>
<dbReference type="NCBIfam" id="TIGR00230">
    <property type="entry name" value="sfsA"/>
    <property type="match status" value="1"/>
</dbReference>
<dbReference type="PANTHER" id="PTHR30545">
    <property type="entry name" value="SUGAR FERMENTATION STIMULATION PROTEIN A"/>
    <property type="match status" value="1"/>
</dbReference>
<dbReference type="PANTHER" id="PTHR30545:SF2">
    <property type="entry name" value="SUGAR FERMENTATION STIMULATION PROTEIN A"/>
    <property type="match status" value="1"/>
</dbReference>
<dbReference type="Pfam" id="PF03749">
    <property type="entry name" value="SfsA"/>
    <property type="match status" value="1"/>
</dbReference>
<dbReference type="Pfam" id="PF17746">
    <property type="entry name" value="SfsA_N"/>
    <property type="match status" value="1"/>
</dbReference>
<evidence type="ECO:0000255" key="1">
    <source>
        <dbReference type="HAMAP-Rule" id="MF_00095"/>
    </source>
</evidence>
<accession>A3DJP1</accession>
<feature type="chain" id="PRO_1000007979" description="Sugar fermentation stimulation protein homolog">
    <location>
        <begin position="1"/>
        <end position="233"/>
    </location>
</feature>